<gene>
    <name evidence="6" type="primary">Fam209</name>
</gene>
<organism>
    <name type="scientific">Mus musculus</name>
    <name type="common">Mouse</name>
    <dbReference type="NCBI Taxonomy" id="10090"/>
    <lineage>
        <taxon>Eukaryota</taxon>
        <taxon>Metazoa</taxon>
        <taxon>Chordata</taxon>
        <taxon>Craniata</taxon>
        <taxon>Vertebrata</taxon>
        <taxon>Euteleostomi</taxon>
        <taxon>Mammalia</taxon>
        <taxon>Eutheria</taxon>
        <taxon>Euarchontoglires</taxon>
        <taxon>Glires</taxon>
        <taxon>Rodentia</taxon>
        <taxon>Myomorpha</taxon>
        <taxon>Muroidea</taxon>
        <taxon>Muridae</taxon>
        <taxon>Murinae</taxon>
        <taxon>Mus</taxon>
        <taxon>Mus</taxon>
    </lineage>
</organism>
<proteinExistence type="evidence at protein level"/>
<keyword id="KW-0221">Differentiation</keyword>
<keyword id="KW-0472">Membrane</keyword>
<keyword id="KW-0539">Nucleus</keyword>
<keyword id="KW-1185">Reference proteome</keyword>
<keyword id="KW-0732">Signal</keyword>
<keyword id="KW-0744">Spermatogenesis</keyword>
<keyword id="KW-0812">Transmembrane</keyword>
<keyword id="KW-1133">Transmembrane helix</keyword>
<name>FA209_MOUSE</name>
<comment type="function">
    <text evidence="3">Required for sperm acrosome biogenesis.</text>
</comment>
<comment type="subunit">
    <text evidence="3 4">Interacts with DPY19L2 (PubMed:34471926). Interacts with CYLC1; the interaction may be relevant for proper acrosome attachment to the nuclear envelope (PubMed:38573307).</text>
</comment>
<comment type="subcellular location">
    <subcellularLocation>
        <location evidence="3">Nucleus inner membrane</location>
        <topology evidence="1">Single-pass type I membrane protein</topology>
    </subcellularLocation>
</comment>
<comment type="tissue specificity">
    <text evidence="3">Predominately expressed in testis.</text>
</comment>
<comment type="developmental stage">
    <text evidence="3">Detectable at postnatal day 20 when round spermatids begin to appear.</text>
</comment>
<evidence type="ECO:0000255" key="1"/>
<evidence type="ECO:0000256" key="2">
    <source>
        <dbReference type="SAM" id="MobiDB-lite"/>
    </source>
</evidence>
<evidence type="ECO:0000269" key="3">
    <source>
    </source>
</evidence>
<evidence type="ECO:0000269" key="4">
    <source>
    </source>
</evidence>
<evidence type="ECO:0000305" key="5"/>
<evidence type="ECO:0000312" key="6">
    <source>
        <dbReference type="MGI" id="MGI:1923676"/>
    </source>
</evidence>
<accession>A2APA5</accession>
<accession>Q9D9T2</accession>
<protein>
    <recommendedName>
        <fullName>Protein FAM209</fullName>
    </recommendedName>
</protein>
<dbReference type="EMBL" id="AK006503">
    <property type="protein sequence ID" value="BAB24622.1"/>
    <property type="molecule type" value="mRNA"/>
</dbReference>
<dbReference type="EMBL" id="GL456092">
    <property type="status" value="NOT_ANNOTATED_CDS"/>
    <property type="molecule type" value="Genomic_DNA"/>
</dbReference>
<dbReference type="EMBL" id="BC137932">
    <property type="protein sequence ID" value="AAI37933.1"/>
    <property type="molecule type" value="mRNA"/>
</dbReference>
<dbReference type="EMBL" id="BC137933">
    <property type="protein sequence ID" value="AAI37934.1"/>
    <property type="molecule type" value="mRNA"/>
</dbReference>
<dbReference type="CCDS" id="CCDS50809.1"/>
<dbReference type="RefSeq" id="NP_083884.1">
    <property type="nucleotide sequence ID" value="NM_029608.1"/>
</dbReference>
<dbReference type="FunCoup" id="A2APA5">
    <property type="interactions" value="79"/>
</dbReference>
<dbReference type="STRING" id="10090.ENSMUSP00000029007"/>
<dbReference type="iPTMnet" id="A2APA5"/>
<dbReference type="PhosphoSitePlus" id="A2APA5"/>
<dbReference type="PaxDb" id="10090-ENSMUSP00000029007"/>
<dbReference type="ProteomicsDB" id="330737"/>
<dbReference type="Ensembl" id="ENSMUST00000029007.3">
    <property type="protein sequence ID" value="ENSMUSP00000029007.3"/>
    <property type="gene ID" value="ENSMUSG00000027505.3"/>
</dbReference>
<dbReference type="GeneID" id="76426"/>
<dbReference type="KEGG" id="mmu:76426"/>
<dbReference type="UCSC" id="uc008ocy.2">
    <property type="organism name" value="mouse"/>
</dbReference>
<dbReference type="AGR" id="MGI:1923676"/>
<dbReference type="CTD" id="76426"/>
<dbReference type="MGI" id="MGI:1923676">
    <property type="gene designation" value="Fam209"/>
</dbReference>
<dbReference type="VEuPathDB" id="HostDB:ENSMUSG00000027505"/>
<dbReference type="eggNOG" id="ENOG502SQY6">
    <property type="taxonomic scope" value="Eukaryota"/>
</dbReference>
<dbReference type="GeneTree" id="ENSGT00390000005057"/>
<dbReference type="HOGENOM" id="CLU_1585866_0_0_1"/>
<dbReference type="InParanoid" id="A2APA5"/>
<dbReference type="OMA" id="PPGLRCF"/>
<dbReference type="OrthoDB" id="9507615at2759"/>
<dbReference type="PhylomeDB" id="A2APA5"/>
<dbReference type="TreeFam" id="TF338191"/>
<dbReference type="BioGRID-ORCS" id="76426">
    <property type="hits" value="6 hits in 78 CRISPR screens"/>
</dbReference>
<dbReference type="ChiTaRS" id="Fam209">
    <property type="organism name" value="mouse"/>
</dbReference>
<dbReference type="PRO" id="PR:A2APA5"/>
<dbReference type="Proteomes" id="UP000000589">
    <property type="component" value="Chromosome 2"/>
</dbReference>
<dbReference type="RNAct" id="A2APA5">
    <property type="molecule type" value="protein"/>
</dbReference>
<dbReference type="Bgee" id="ENSMUSG00000027505">
    <property type="expression patterns" value="Expressed in spermatid and 24 other cell types or tissues"/>
</dbReference>
<dbReference type="GO" id="GO:0005637">
    <property type="term" value="C:nuclear inner membrane"/>
    <property type="evidence" value="ECO:0000314"/>
    <property type="project" value="UniProtKB"/>
</dbReference>
<dbReference type="GO" id="GO:0001675">
    <property type="term" value="P:acrosome assembly"/>
    <property type="evidence" value="ECO:0000315"/>
    <property type="project" value="UniProtKB"/>
</dbReference>
<dbReference type="GO" id="GO:0007286">
    <property type="term" value="P:spermatid development"/>
    <property type="evidence" value="ECO:0000315"/>
    <property type="project" value="UniProtKB"/>
</dbReference>
<dbReference type="InterPro" id="IPR027943">
    <property type="entry name" value="FAM209"/>
</dbReference>
<dbReference type="PANTHER" id="PTHR35157">
    <property type="entry name" value="PROTEIN FAM209A"/>
    <property type="match status" value="1"/>
</dbReference>
<dbReference type="PANTHER" id="PTHR35157:SF1">
    <property type="entry name" value="PROTEIN FAM209A"/>
    <property type="match status" value="1"/>
</dbReference>
<dbReference type="Pfam" id="PF15206">
    <property type="entry name" value="FAM209"/>
    <property type="match status" value="1"/>
</dbReference>
<sequence length="170" mass="19554">MRTLLRWCLFLSLCVSCACAFMFSSMREKTKESPGKVPCGGHFRIRQNLPENAQGWLGNKWLWLFVAIMIYVMLKFRGDGENKEQHPPGLRGCQLRSPPKKAQNISPSKDFTFNTLTQLEMELVKFVSKVRNLKVSMATNSNSRQQVPESPTNLYNNVTIYEIWGEEDSE</sequence>
<reference key="1">
    <citation type="journal article" date="2005" name="Science">
        <title>The transcriptional landscape of the mammalian genome.</title>
        <authorList>
            <person name="Carninci P."/>
            <person name="Kasukawa T."/>
            <person name="Katayama S."/>
            <person name="Gough J."/>
            <person name="Frith M.C."/>
            <person name="Maeda N."/>
            <person name="Oyama R."/>
            <person name="Ravasi T."/>
            <person name="Lenhard B."/>
            <person name="Wells C."/>
            <person name="Kodzius R."/>
            <person name="Shimokawa K."/>
            <person name="Bajic V.B."/>
            <person name="Brenner S.E."/>
            <person name="Batalov S."/>
            <person name="Forrest A.R."/>
            <person name="Zavolan M."/>
            <person name="Davis M.J."/>
            <person name="Wilming L.G."/>
            <person name="Aidinis V."/>
            <person name="Allen J.E."/>
            <person name="Ambesi-Impiombato A."/>
            <person name="Apweiler R."/>
            <person name="Aturaliya R.N."/>
            <person name="Bailey T.L."/>
            <person name="Bansal M."/>
            <person name="Baxter L."/>
            <person name="Beisel K.W."/>
            <person name="Bersano T."/>
            <person name="Bono H."/>
            <person name="Chalk A.M."/>
            <person name="Chiu K.P."/>
            <person name="Choudhary V."/>
            <person name="Christoffels A."/>
            <person name="Clutterbuck D.R."/>
            <person name="Crowe M.L."/>
            <person name="Dalla E."/>
            <person name="Dalrymple B.P."/>
            <person name="de Bono B."/>
            <person name="Della Gatta G."/>
            <person name="di Bernardo D."/>
            <person name="Down T."/>
            <person name="Engstrom P."/>
            <person name="Fagiolini M."/>
            <person name="Faulkner G."/>
            <person name="Fletcher C.F."/>
            <person name="Fukushima T."/>
            <person name="Furuno M."/>
            <person name="Futaki S."/>
            <person name="Gariboldi M."/>
            <person name="Georgii-Hemming P."/>
            <person name="Gingeras T.R."/>
            <person name="Gojobori T."/>
            <person name="Green R.E."/>
            <person name="Gustincich S."/>
            <person name="Harbers M."/>
            <person name="Hayashi Y."/>
            <person name="Hensch T.K."/>
            <person name="Hirokawa N."/>
            <person name="Hill D."/>
            <person name="Huminiecki L."/>
            <person name="Iacono M."/>
            <person name="Ikeo K."/>
            <person name="Iwama A."/>
            <person name="Ishikawa T."/>
            <person name="Jakt M."/>
            <person name="Kanapin A."/>
            <person name="Katoh M."/>
            <person name="Kawasawa Y."/>
            <person name="Kelso J."/>
            <person name="Kitamura H."/>
            <person name="Kitano H."/>
            <person name="Kollias G."/>
            <person name="Krishnan S.P."/>
            <person name="Kruger A."/>
            <person name="Kummerfeld S.K."/>
            <person name="Kurochkin I.V."/>
            <person name="Lareau L.F."/>
            <person name="Lazarevic D."/>
            <person name="Lipovich L."/>
            <person name="Liu J."/>
            <person name="Liuni S."/>
            <person name="McWilliam S."/>
            <person name="Madan Babu M."/>
            <person name="Madera M."/>
            <person name="Marchionni L."/>
            <person name="Matsuda H."/>
            <person name="Matsuzawa S."/>
            <person name="Miki H."/>
            <person name="Mignone F."/>
            <person name="Miyake S."/>
            <person name="Morris K."/>
            <person name="Mottagui-Tabar S."/>
            <person name="Mulder N."/>
            <person name="Nakano N."/>
            <person name="Nakauchi H."/>
            <person name="Ng P."/>
            <person name="Nilsson R."/>
            <person name="Nishiguchi S."/>
            <person name="Nishikawa S."/>
            <person name="Nori F."/>
            <person name="Ohara O."/>
            <person name="Okazaki Y."/>
            <person name="Orlando V."/>
            <person name="Pang K.C."/>
            <person name="Pavan W.J."/>
            <person name="Pavesi G."/>
            <person name="Pesole G."/>
            <person name="Petrovsky N."/>
            <person name="Piazza S."/>
            <person name="Reed J."/>
            <person name="Reid J.F."/>
            <person name="Ring B.Z."/>
            <person name="Ringwald M."/>
            <person name="Rost B."/>
            <person name="Ruan Y."/>
            <person name="Salzberg S.L."/>
            <person name="Sandelin A."/>
            <person name="Schneider C."/>
            <person name="Schoenbach C."/>
            <person name="Sekiguchi K."/>
            <person name="Semple C.A."/>
            <person name="Seno S."/>
            <person name="Sessa L."/>
            <person name="Sheng Y."/>
            <person name="Shibata Y."/>
            <person name="Shimada H."/>
            <person name="Shimada K."/>
            <person name="Silva D."/>
            <person name="Sinclair B."/>
            <person name="Sperling S."/>
            <person name="Stupka E."/>
            <person name="Sugiura K."/>
            <person name="Sultana R."/>
            <person name="Takenaka Y."/>
            <person name="Taki K."/>
            <person name="Tammoja K."/>
            <person name="Tan S.L."/>
            <person name="Tang S."/>
            <person name="Taylor M.S."/>
            <person name="Tegner J."/>
            <person name="Teichmann S.A."/>
            <person name="Ueda H.R."/>
            <person name="van Nimwegen E."/>
            <person name="Verardo R."/>
            <person name="Wei C.L."/>
            <person name="Yagi K."/>
            <person name="Yamanishi H."/>
            <person name="Zabarovsky E."/>
            <person name="Zhu S."/>
            <person name="Zimmer A."/>
            <person name="Hide W."/>
            <person name="Bult C."/>
            <person name="Grimmond S.M."/>
            <person name="Teasdale R.D."/>
            <person name="Liu E.T."/>
            <person name="Brusic V."/>
            <person name="Quackenbush J."/>
            <person name="Wahlestedt C."/>
            <person name="Mattick J.S."/>
            <person name="Hume D.A."/>
            <person name="Kai C."/>
            <person name="Sasaki D."/>
            <person name="Tomaru Y."/>
            <person name="Fukuda S."/>
            <person name="Kanamori-Katayama M."/>
            <person name="Suzuki M."/>
            <person name="Aoki J."/>
            <person name="Arakawa T."/>
            <person name="Iida J."/>
            <person name="Imamura K."/>
            <person name="Itoh M."/>
            <person name="Kato T."/>
            <person name="Kawaji H."/>
            <person name="Kawagashira N."/>
            <person name="Kawashima T."/>
            <person name="Kojima M."/>
            <person name="Kondo S."/>
            <person name="Konno H."/>
            <person name="Nakano K."/>
            <person name="Ninomiya N."/>
            <person name="Nishio T."/>
            <person name="Okada M."/>
            <person name="Plessy C."/>
            <person name="Shibata K."/>
            <person name="Shiraki T."/>
            <person name="Suzuki S."/>
            <person name="Tagami M."/>
            <person name="Waki K."/>
            <person name="Watahiki A."/>
            <person name="Okamura-Oho Y."/>
            <person name="Suzuki H."/>
            <person name="Kawai J."/>
            <person name="Hayashizaki Y."/>
        </authorList>
    </citation>
    <scope>NUCLEOTIDE SEQUENCE [LARGE SCALE MRNA]</scope>
    <source>
        <strain>C57BL/6J</strain>
        <tissue>Testis</tissue>
    </source>
</reference>
<reference key="2">
    <citation type="journal article" date="2009" name="PLoS Biol.">
        <title>Lineage-specific biology revealed by a finished genome assembly of the mouse.</title>
        <authorList>
            <person name="Church D.M."/>
            <person name="Goodstadt L."/>
            <person name="Hillier L.W."/>
            <person name="Zody M.C."/>
            <person name="Goldstein S."/>
            <person name="She X."/>
            <person name="Bult C.J."/>
            <person name="Agarwala R."/>
            <person name="Cherry J.L."/>
            <person name="DiCuccio M."/>
            <person name="Hlavina W."/>
            <person name="Kapustin Y."/>
            <person name="Meric P."/>
            <person name="Maglott D."/>
            <person name="Birtle Z."/>
            <person name="Marques A.C."/>
            <person name="Graves T."/>
            <person name="Zhou S."/>
            <person name="Teague B."/>
            <person name="Potamousis K."/>
            <person name="Churas C."/>
            <person name="Place M."/>
            <person name="Herschleb J."/>
            <person name="Runnheim R."/>
            <person name="Forrest D."/>
            <person name="Amos-Landgraf J."/>
            <person name="Schwartz D.C."/>
            <person name="Cheng Z."/>
            <person name="Lindblad-Toh K."/>
            <person name="Eichler E.E."/>
            <person name="Ponting C.P."/>
        </authorList>
    </citation>
    <scope>NUCLEOTIDE SEQUENCE [LARGE SCALE GENOMIC DNA]</scope>
    <source>
        <strain>C57BL/6J</strain>
    </source>
</reference>
<reference key="3">
    <citation type="journal article" date="2004" name="Genome Res.">
        <title>The status, quality, and expansion of the NIH full-length cDNA project: the Mammalian Gene Collection (MGC).</title>
        <authorList>
            <consortium name="The MGC Project Team"/>
        </authorList>
    </citation>
    <scope>NUCLEOTIDE SEQUENCE [LARGE SCALE MRNA]</scope>
    <source>
        <tissue>Brain</tissue>
        <tissue>Testis</tissue>
    </source>
</reference>
<reference key="4">
    <citation type="journal article" date="2021" name="J. Cell Sci.">
        <title>FAM209 associates with DPY19L2, and is required for sperm acrosome biogenesis and fertility in mice.</title>
        <authorList>
            <person name="Castaneda J.M."/>
            <person name="Shimada K."/>
            <person name="Satouh Y."/>
            <person name="Yu Z."/>
            <person name="Devlin D.J."/>
            <person name="Ikawa M."/>
            <person name="Matzuk M.M."/>
        </authorList>
    </citation>
    <scope>TISSUE SPECIFICITY</scope>
    <scope>FUNCTION</scope>
    <scope>SUBCELLULAR LOCATION</scope>
    <scope>INTERACTION WITH DPY19L2</scope>
    <scope>DEVELOPMENTAL STAGE</scope>
</reference>
<reference key="5">
    <citation type="journal article" date="2024" name="Elife">
        <title>Disruption in CYLC1 leads to acrosome detachment, sperm head deformity, and male in/subfertility in humans and mice.</title>
        <authorList>
            <person name="Jin H.J."/>
            <person name="Fan Y."/>
            <person name="Yang X."/>
            <person name="Dong Y."/>
            <person name="Zhang X.Z."/>
            <person name="Geng X.Y."/>
            <person name="Yan Z."/>
            <person name="Wu L."/>
            <person name="Ma M."/>
            <person name="Li B."/>
            <person name="Lyu Q."/>
            <person name="Pan Y."/>
            <person name="Liu M."/>
            <person name="Kuang Y."/>
            <person name="Chen S.R."/>
        </authorList>
    </citation>
    <scope>INTERACTION WITH CYLC1</scope>
</reference>
<feature type="signal peptide" evidence="1">
    <location>
        <begin position="1"/>
        <end position="20"/>
    </location>
</feature>
<feature type="chain" id="PRO_5015086030" description="Protein FAM209">
    <location>
        <begin position="21"/>
        <end position="170"/>
    </location>
</feature>
<feature type="transmembrane region" description="Helical" evidence="1">
    <location>
        <begin position="56"/>
        <end position="76"/>
    </location>
</feature>
<feature type="region of interest" description="Disordered" evidence="2">
    <location>
        <begin position="83"/>
        <end position="107"/>
    </location>
</feature>
<feature type="sequence conflict" description="In Ref. 1; BAB24622." evidence="5" ref="1">
    <original>LLRWC</original>
    <variation>QLKWR</variation>
    <location>
        <begin position="4"/>
        <end position="8"/>
    </location>
</feature>
<feature type="sequence conflict" description="In Ref. 1; BAB24622." evidence="5" ref="1">
    <original>CVS</original>
    <variation>GKL</variation>
    <location>
        <begin position="14"/>
        <end position="16"/>
    </location>
</feature>